<protein>
    <recommendedName>
        <fullName evidence="3">Small ribosomal subunit protein eS1A</fullName>
    </recommendedName>
    <alternativeName>
        <fullName evidence="5">40S ribosomal protein S1-A</fullName>
    </alternativeName>
</protein>
<comment type="subunit">
    <text evidence="3">Component of the small ribosomal subunit. Mature ribosomes consist of a small (40S) and a large (60S) subunit. The 40S subunit contains about 33 different proteins and 1 molecule of RNA (18S). The 60S subunit contains about 49 different proteins and 3 molecules of RNA (25S, 5.8S and 5S).</text>
</comment>
<comment type="subcellular location">
    <subcellularLocation>
        <location evidence="3">Cytoplasm</location>
    </subcellularLocation>
</comment>
<comment type="similarity">
    <text evidence="3">Belongs to the eukaryotic ribosomal protein eS1 family.</text>
</comment>
<sequence>MAVGKNKRLSKGKKGQKKRVVDPFTRKEWFDIKAPSTFENRNVGKTLVNKSTGLKSASDALKGRVVEVCLADLQGSEDHSFRKIKLRVDEVQGKNLLTNFHGMDFTTDKLRSMVRKWQTLIEANVTVKTSDDYVLRIFAIAFTRKQANQVKRHSYAQSSHIRAIRKVISEILTKEVQGSTLAQLTSKLIPEVINKEIENATKDIFPLQNIHVRKVKLLKQPKFDVGALMALHGEGSGEEKGKKVTGFKDEVLETV</sequence>
<gene>
    <name evidence="3" type="primary">RPS1A</name>
    <name type="ORF">SCRG_04379</name>
</gene>
<name>RS3A1_YEAS1</name>
<evidence type="ECO:0000250" key="1">
    <source>
        <dbReference type="UniProtKB" id="P23248"/>
    </source>
</evidence>
<evidence type="ECO:0000250" key="2">
    <source>
        <dbReference type="UniProtKB" id="P33442"/>
    </source>
</evidence>
<evidence type="ECO:0000255" key="3">
    <source>
        <dbReference type="HAMAP-Rule" id="MF_03122"/>
    </source>
</evidence>
<evidence type="ECO:0000256" key="4">
    <source>
        <dbReference type="SAM" id="MobiDB-lite"/>
    </source>
</evidence>
<evidence type="ECO:0000305" key="5"/>
<reference key="1">
    <citation type="submission" date="2005-03" db="EMBL/GenBank/DDBJ databases">
        <title>Annotation of the Saccharomyces cerevisiae RM11-1a genome.</title>
        <authorList>
            <consortium name="The Broad Institute Genome Sequencing Platform"/>
            <person name="Birren B.W."/>
            <person name="Lander E.S."/>
            <person name="Galagan J.E."/>
            <person name="Nusbaum C."/>
            <person name="Devon K."/>
            <person name="Cuomo C."/>
            <person name="Jaffe D.B."/>
            <person name="Butler J."/>
            <person name="Alvarez P."/>
            <person name="Gnerre S."/>
            <person name="Grabherr M."/>
            <person name="Kleber M."/>
            <person name="Mauceli E.W."/>
            <person name="Brockman W."/>
            <person name="MacCallum I.A."/>
            <person name="Rounsley S."/>
            <person name="Young S.K."/>
            <person name="LaButti K."/>
            <person name="Pushparaj V."/>
            <person name="DeCaprio D."/>
            <person name="Crawford M."/>
            <person name="Koehrsen M."/>
            <person name="Engels R."/>
            <person name="Montgomery P."/>
            <person name="Pearson M."/>
            <person name="Howarth C."/>
            <person name="Larson L."/>
            <person name="Luoma S."/>
            <person name="White J."/>
            <person name="O'Leary S."/>
            <person name="Kodira C.D."/>
            <person name="Zeng Q."/>
            <person name="Yandava C."/>
            <person name="Alvarado L."/>
            <person name="Pratt S."/>
            <person name="Kruglyak L."/>
        </authorList>
    </citation>
    <scope>NUCLEOTIDE SEQUENCE [LARGE SCALE GENOMIC DNA]</scope>
    <source>
        <strain>RM11-1a</strain>
    </source>
</reference>
<feature type="initiator methionine" description="Removed" evidence="3">
    <location>
        <position position="1"/>
    </location>
</feature>
<feature type="chain" id="PRO_0000389408" description="Small ribosomal subunit protein eS1A">
    <location>
        <begin position="2"/>
        <end position="255"/>
    </location>
</feature>
<feature type="region of interest" description="Disordered" evidence="4">
    <location>
        <begin position="1"/>
        <end position="20"/>
    </location>
</feature>
<feature type="compositionally biased region" description="Basic residues" evidence="4">
    <location>
        <begin position="1"/>
        <end position="18"/>
    </location>
</feature>
<feature type="modified residue" description="N-acetylalanine; partial" evidence="2 3">
    <location>
        <position position="2"/>
    </location>
</feature>
<feature type="modified residue" description="Phosphothreonine" evidence="2">
    <location>
        <position position="245"/>
    </location>
</feature>
<feature type="modified residue" description="Phosphothreonine" evidence="2">
    <location>
        <position position="254"/>
    </location>
</feature>
<feature type="cross-link" description="Glycyl lysine isopeptide (Lys-Gly) (interchain with G-Cter in ubiquitin)" evidence="1">
    <location>
        <position position="248"/>
    </location>
</feature>
<dbReference type="EMBL" id="DS981519">
    <property type="protein sequence ID" value="EDV08744.1"/>
    <property type="molecule type" value="Genomic_DNA"/>
</dbReference>
<dbReference type="EMDB" id="EMD-10397"/>
<dbReference type="EMDB" id="EMD-10537"/>
<dbReference type="EMDB" id="EMD-16182"/>
<dbReference type="EMDB" id="EMD-32791"/>
<dbReference type="EMDB" id="EMD-32794"/>
<dbReference type="SMR" id="B3RHV0"/>
<dbReference type="IntAct" id="B3RHV0">
    <property type="interactions" value="1"/>
</dbReference>
<dbReference type="HOGENOM" id="CLU_062507_0_0_1"/>
<dbReference type="OrthoDB" id="24542at4893"/>
<dbReference type="Proteomes" id="UP000008335">
    <property type="component" value="Unassembled WGS sequence"/>
</dbReference>
<dbReference type="GO" id="GO:0022627">
    <property type="term" value="C:cytosolic small ribosomal subunit"/>
    <property type="evidence" value="ECO:0007669"/>
    <property type="project" value="UniProtKB-UniRule"/>
</dbReference>
<dbReference type="GO" id="GO:0003735">
    <property type="term" value="F:structural constituent of ribosome"/>
    <property type="evidence" value="ECO:0007669"/>
    <property type="project" value="UniProtKB-UniRule"/>
</dbReference>
<dbReference type="GO" id="GO:0006412">
    <property type="term" value="P:translation"/>
    <property type="evidence" value="ECO:0007669"/>
    <property type="project" value="UniProtKB-UniRule"/>
</dbReference>
<dbReference type="HAMAP" id="MF_03122">
    <property type="entry name" value="Ribosomal_eS1_euk"/>
    <property type="match status" value="1"/>
</dbReference>
<dbReference type="InterPro" id="IPR001593">
    <property type="entry name" value="Ribosomal_eS1"/>
</dbReference>
<dbReference type="InterPro" id="IPR018281">
    <property type="entry name" value="Ribosomal_eS1_CS"/>
</dbReference>
<dbReference type="InterPro" id="IPR027500">
    <property type="entry name" value="Ribosomal_eS1_euk"/>
</dbReference>
<dbReference type="PANTHER" id="PTHR11830">
    <property type="entry name" value="40S RIBOSOMAL PROTEIN S3A"/>
    <property type="match status" value="1"/>
</dbReference>
<dbReference type="Pfam" id="PF01015">
    <property type="entry name" value="Ribosomal_S3Ae"/>
    <property type="match status" value="1"/>
</dbReference>
<dbReference type="SMART" id="SM01397">
    <property type="entry name" value="Ribosomal_S3Ae"/>
    <property type="match status" value="1"/>
</dbReference>
<dbReference type="PROSITE" id="PS01191">
    <property type="entry name" value="RIBOSOMAL_S3AE"/>
    <property type="match status" value="1"/>
</dbReference>
<accession>B3RHV0</accession>
<keyword id="KW-0007">Acetylation</keyword>
<keyword id="KW-0963">Cytoplasm</keyword>
<keyword id="KW-1017">Isopeptide bond</keyword>
<keyword id="KW-0597">Phosphoprotein</keyword>
<keyword id="KW-0687">Ribonucleoprotein</keyword>
<keyword id="KW-0689">Ribosomal protein</keyword>
<keyword id="KW-0832">Ubl conjugation</keyword>
<organism>
    <name type="scientific">Saccharomyces cerevisiae (strain RM11-1a)</name>
    <name type="common">Baker's yeast</name>
    <dbReference type="NCBI Taxonomy" id="285006"/>
    <lineage>
        <taxon>Eukaryota</taxon>
        <taxon>Fungi</taxon>
        <taxon>Dikarya</taxon>
        <taxon>Ascomycota</taxon>
        <taxon>Saccharomycotina</taxon>
        <taxon>Saccharomycetes</taxon>
        <taxon>Saccharomycetales</taxon>
        <taxon>Saccharomycetaceae</taxon>
        <taxon>Saccharomyces</taxon>
    </lineage>
</organism>
<proteinExistence type="inferred from homology"/>